<protein>
    <recommendedName>
        <fullName evidence="1">Iron-sulfur cluster repair protein ScdA</fullName>
    </recommendedName>
</protein>
<dbReference type="EMBL" id="CP000703">
    <property type="protein sequence ID" value="ABQ48051.1"/>
    <property type="molecule type" value="Genomic_DNA"/>
</dbReference>
<dbReference type="RefSeq" id="WP_000608818.1">
    <property type="nucleotide sequence ID" value="NC_009487.1"/>
</dbReference>
<dbReference type="SMR" id="A5IPC8"/>
<dbReference type="KEGG" id="saj:SaurJH9_0244"/>
<dbReference type="HOGENOM" id="CLU_076075_0_1_9"/>
<dbReference type="GO" id="GO:0005737">
    <property type="term" value="C:cytoplasm"/>
    <property type="evidence" value="ECO:0007669"/>
    <property type="project" value="UniProtKB-SubCell"/>
</dbReference>
<dbReference type="GO" id="GO:0046872">
    <property type="term" value="F:metal ion binding"/>
    <property type="evidence" value="ECO:0007669"/>
    <property type="project" value="UniProtKB-KW"/>
</dbReference>
<dbReference type="GO" id="GO:0030091">
    <property type="term" value="P:protein repair"/>
    <property type="evidence" value="ECO:0007669"/>
    <property type="project" value="UniProtKB-UniRule"/>
</dbReference>
<dbReference type="GO" id="GO:0051409">
    <property type="term" value="P:response to nitrosative stress"/>
    <property type="evidence" value="ECO:0007669"/>
    <property type="project" value="UniProtKB-UniRule"/>
</dbReference>
<dbReference type="GO" id="GO:0006979">
    <property type="term" value="P:response to oxidative stress"/>
    <property type="evidence" value="ECO:0007669"/>
    <property type="project" value="UniProtKB-UniRule"/>
</dbReference>
<dbReference type="FunFam" id="1.20.120.520:FF:000003">
    <property type="entry name" value="Iron-sulfur cluster repair protein ScdA"/>
    <property type="match status" value="1"/>
</dbReference>
<dbReference type="Gene3D" id="1.20.120.520">
    <property type="entry name" value="nmb1532 protein domain like"/>
    <property type="match status" value="1"/>
</dbReference>
<dbReference type="Gene3D" id="1.10.3910.10">
    <property type="entry name" value="SP0561-like"/>
    <property type="match status" value="1"/>
</dbReference>
<dbReference type="HAMAP" id="MF_01156">
    <property type="entry name" value="RIC_ScdA"/>
    <property type="match status" value="1"/>
</dbReference>
<dbReference type="InterPro" id="IPR012312">
    <property type="entry name" value="Hemerythrin-like"/>
</dbReference>
<dbReference type="InterPro" id="IPR019903">
    <property type="entry name" value="RIC_family"/>
</dbReference>
<dbReference type="InterPro" id="IPR023551">
    <property type="entry name" value="ScdA"/>
</dbReference>
<dbReference type="InterPro" id="IPR038062">
    <property type="entry name" value="ScdA-like_N_sf"/>
</dbReference>
<dbReference type="NCBIfam" id="TIGR03652">
    <property type="entry name" value="FeS_repair_RIC"/>
    <property type="match status" value="1"/>
</dbReference>
<dbReference type="NCBIfam" id="NF009777">
    <property type="entry name" value="PRK13276.1"/>
    <property type="match status" value="1"/>
</dbReference>
<dbReference type="PANTHER" id="PTHR36438">
    <property type="entry name" value="IRON-SULFUR CLUSTER REPAIR PROTEIN YTFE"/>
    <property type="match status" value="1"/>
</dbReference>
<dbReference type="PANTHER" id="PTHR36438:SF1">
    <property type="entry name" value="IRON-SULFUR CLUSTER REPAIR PROTEIN YTFE"/>
    <property type="match status" value="1"/>
</dbReference>
<dbReference type="Pfam" id="PF01814">
    <property type="entry name" value="Hemerythrin"/>
    <property type="match status" value="1"/>
</dbReference>
<dbReference type="Pfam" id="PF04405">
    <property type="entry name" value="ScdA_N"/>
    <property type="match status" value="1"/>
</dbReference>
<dbReference type="SUPFAM" id="SSF140683">
    <property type="entry name" value="SP0561-like"/>
    <property type="match status" value="1"/>
</dbReference>
<proteinExistence type="inferred from homology"/>
<accession>A5IPC8</accession>
<reference key="1">
    <citation type="submission" date="2007-05" db="EMBL/GenBank/DDBJ databases">
        <title>Complete sequence of chromosome of Staphylococcus aureus subsp. aureus JH9.</title>
        <authorList>
            <consortium name="US DOE Joint Genome Institute"/>
            <person name="Copeland A."/>
            <person name="Lucas S."/>
            <person name="Lapidus A."/>
            <person name="Barry K."/>
            <person name="Detter J.C."/>
            <person name="Glavina del Rio T."/>
            <person name="Hammon N."/>
            <person name="Israni S."/>
            <person name="Pitluck S."/>
            <person name="Chain P."/>
            <person name="Malfatti S."/>
            <person name="Shin M."/>
            <person name="Vergez L."/>
            <person name="Schmutz J."/>
            <person name="Larimer F."/>
            <person name="Land M."/>
            <person name="Hauser L."/>
            <person name="Kyrpides N."/>
            <person name="Kim E."/>
            <person name="Tomasz A."/>
            <person name="Richardson P."/>
        </authorList>
    </citation>
    <scope>NUCLEOTIDE SEQUENCE [LARGE SCALE GENOMIC DNA]</scope>
    <source>
        <strain>JH9</strain>
    </source>
</reference>
<evidence type="ECO:0000255" key="1">
    <source>
        <dbReference type="HAMAP-Rule" id="MF_01156"/>
    </source>
</evidence>
<gene>
    <name evidence="1" type="primary">scdA</name>
    <name type="ordered locus">SaurJH9_0244</name>
</gene>
<sequence>MINKNDIVADIVIDYPKAADIFRSVGIDFCCGGQVSIEAASLEKKNVDLNELLQRLNDVEQTNTPGSLNPKFLNVSSLIQYIQAAYHEPLREEFKNLTPYVTKLSKVHGPNHPYLVELKETYDTFKSGMLEHMQKEDDVDFPKLIKYEQGEVVNDINTVIDDLVSDHIATGQLLVKMSDLTSSYEPPIEACGTWRLVYQRLKALEVLTHEHVHLENHVLFKKVS</sequence>
<feature type="chain" id="PRO_1000085350" description="Iron-sulfur cluster repair protein ScdA">
    <location>
        <begin position="1"/>
        <end position="224"/>
    </location>
</feature>
<comment type="function">
    <text evidence="1">Di-iron-containing protein involved in the repair of iron-sulfur clusters damaged by oxidative and nitrosative stress conditions.</text>
</comment>
<comment type="subunit">
    <text evidence="1">Homodimer.</text>
</comment>
<comment type="subcellular location">
    <subcellularLocation>
        <location evidence="1">Cytoplasm</location>
    </subcellularLocation>
</comment>
<comment type="similarity">
    <text evidence="1">Belongs to the RIC family. ScdA subfamily.</text>
</comment>
<organism>
    <name type="scientific">Staphylococcus aureus (strain JH9)</name>
    <dbReference type="NCBI Taxonomy" id="359786"/>
    <lineage>
        <taxon>Bacteria</taxon>
        <taxon>Bacillati</taxon>
        <taxon>Bacillota</taxon>
        <taxon>Bacilli</taxon>
        <taxon>Bacillales</taxon>
        <taxon>Staphylococcaceae</taxon>
        <taxon>Staphylococcus</taxon>
    </lineage>
</organism>
<name>SCDA_STAA9</name>
<keyword id="KW-0963">Cytoplasm</keyword>
<keyword id="KW-0408">Iron</keyword>
<keyword id="KW-0479">Metal-binding</keyword>
<keyword id="KW-0346">Stress response</keyword>